<protein>
    <recommendedName>
        <fullName evidence="1">ATP-dependent helicase/nuclease subunit A</fullName>
        <ecNumber evidence="1">3.1.-.-</ecNumber>
        <ecNumber evidence="1">5.6.2.4</ecNumber>
    </recommendedName>
    <alternativeName>
        <fullName evidence="1">ATP-dependent helicase/nuclease AddA</fullName>
    </alternativeName>
    <alternativeName>
        <fullName evidence="1">DNA 3'-5' helicase AddA</fullName>
    </alternativeName>
</protein>
<dbReference type="EC" id="3.1.-.-" evidence="1"/>
<dbReference type="EC" id="5.6.2.4" evidence="1"/>
<dbReference type="EMBL" id="CP000033">
    <property type="protein sequence ID" value="AAV43004.1"/>
    <property type="molecule type" value="Genomic_DNA"/>
</dbReference>
<dbReference type="RefSeq" id="WP_011254366.1">
    <property type="nucleotide sequence ID" value="NC_006814.3"/>
</dbReference>
<dbReference type="RefSeq" id="YP_194035.1">
    <property type="nucleotide sequence ID" value="NC_006814.3"/>
</dbReference>
<dbReference type="SMR" id="Q5FJX0"/>
<dbReference type="STRING" id="272621.LBA1165"/>
<dbReference type="GeneID" id="93289734"/>
<dbReference type="KEGG" id="lac:LBA1165"/>
<dbReference type="PATRIC" id="fig|272621.13.peg.1107"/>
<dbReference type="eggNOG" id="COG1074">
    <property type="taxonomic scope" value="Bacteria"/>
</dbReference>
<dbReference type="HOGENOM" id="CLU_001114_3_1_9"/>
<dbReference type="OrthoDB" id="9810135at2"/>
<dbReference type="BioCyc" id="LACI272621:G1G49-1155-MONOMER"/>
<dbReference type="Proteomes" id="UP000006381">
    <property type="component" value="Chromosome"/>
</dbReference>
<dbReference type="GO" id="GO:0005829">
    <property type="term" value="C:cytosol"/>
    <property type="evidence" value="ECO:0007669"/>
    <property type="project" value="TreeGrafter"/>
</dbReference>
<dbReference type="GO" id="GO:0033202">
    <property type="term" value="C:DNA helicase complex"/>
    <property type="evidence" value="ECO:0007669"/>
    <property type="project" value="TreeGrafter"/>
</dbReference>
<dbReference type="GO" id="GO:0043138">
    <property type="term" value="F:3'-5' DNA helicase activity"/>
    <property type="evidence" value="ECO:0007669"/>
    <property type="project" value="UniProtKB-UniRule"/>
</dbReference>
<dbReference type="GO" id="GO:0008408">
    <property type="term" value="F:3'-5' exonuclease activity"/>
    <property type="evidence" value="ECO:0007669"/>
    <property type="project" value="UniProtKB-UniRule"/>
</dbReference>
<dbReference type="GO" id="GO:0005524">
    <property type="term" value="F:ATP binding"/>
    <property type="evidence" value="ECO:0007669"/>
    <property type="project" value="UniProtKB-UniRule"/>
</dbReference>
<dbReference type="GO" id="GO:0016887">
    <property type="term" value="F:ATP hydrolysis activity"/>
    <property type="evidence" value="ECO:0007669"/>
    <property type="project" value="RHEA"/>
</dbReference>
<dbReference type="GO" id="GO:0003690">
    <property type="term" value="F:double-stranded DNA binding"/>
    <property type="evidence" value="ECO:0007669"/>
    <property type="project" value="UniProtKB-UniRule"/>
</dbReference>
<dbReference type="GO" id="GO:0000724">
    <property type="term" value="P:double-strand break repair via homologous recombination"/>
    <property type="evidence" value="ECO:0007669"/>
    <property type="project" value="UniProtKB-UniRule"/>
</dbReference>
<dbReference type="Gene3D" id="3.90.320.10">
    <property type="match status" value="1"/>
</dbReference>
<dbReference type="Gene3D" id="3.40.50.300">
    <property type="entry name" value="P-loop containing nucleotide triphosphate hydrolases"/>
    <property type="match status" value="4"/>
</dbReference>
<dbReference type="Gene3D" id="1.10.486.10">
    <property type="entry name" value="PCRA, domain 4"/>
    <property type="match status" value="1"/>
</dbReference>
<dbReference type="HAMAP" id="MF_01451">
    <property type="entry name" value="AddA"/>
    <property type="match status" value="1"/>
</dbReference>
<dbReference type="InterPro" id="IPR014152">
    <property type="entry name" value="AddA"/>
</dbReference>
<dbReference type="InterPro" id="IPR014017">
    <property type="entry name" value="DNA_helicase_UvrD-like_C"/>
</dbReference>
<dbReference type="InterPro" id="IPR000212">
    <property type="entry name" value="DNA_helicase_UvrD/REP"/>
</dbReference>
<dbReference type="InterPro" id="IPR027417">
    <property type="entry name" value="P-loop_NTPase"/>
</dbReference>
<dbReference type="InterPro" id="IPR011604">
    <property type="entry name" value="PDDEXK-like_dom_sf"/>
</dbReference>
<dbReference type="InterPro" id="IPR011335">
    <property type="entry name" value="Restrct_endonuc-II-like"/>
</dbReference>
<dbReference type="InterPro" id="IPR014016">
    <property type="entry name" value="UvrD-like_ATP-bd"/>
</dbReference>
<dbReference type="NCBIfam" id="TIGR02785">
    <property type="entry name" value="addA_Gpos"/>
    <property type="match status" value="1"/>
</dbReference>
<dbReference type="PANTHER" id="PTHR11070:SF48">
    <property type="entry name" value="ATP-DEPENDENT HELICASE_NUCLEASE SUBUNIT A"/>
    <property type="match status" value="1"/>
</dbReference>
<dbReference type="PANTHER" id="PTHR11070">
    <property type="entry name" value="UVRD / RECB / PCRA DNA HELICASE FAMILY MEMBER"/>
    <property type="match status" value="1"/>
</dbReference>
<dbReference type="Pfam" id="PF00580">
    <property type="entry name" value="UvrD-helicase"/>
    <property type="match status" value="1"/>
</dbReference>
<dbReference type="Pfam" id="PF13361">
    <property type="entry name" value="UvrD_C"/>
    <property type="match status" value="1"/>
</dbReference>
<dbReference type="SUPFAM" id="SSF52540">
    <property type="entry name" value="P-loop containing nucleoside triphosphate hydrolases"/>
    <property type="match status" value="1"/>
</dbReference>
<dbReference type="SUPFAM" id="SSF52980">
    <property type="entry name" value="Restriction endonuclease-like"/>
    <property type="match status" value="1"/>
</dbReference>
<dbReference type="PROSITE" id="PS51198">
    <property type="entry name" value="UVRD_HELICASE_ATP_BIND"/>
    <property type="match status" value="1"/>
</dbReference>
<dbReference type="PROSITE" id="PS51217">
    <property type="entry name" value="UVRD_HELICASE_CTER"/>
    <property type="match status" value="1"/>
</dbReference>
<keyword id="KW-0067">ATP-binding</keyword>
<keyword id="KW-0227">DNA damage</keyword>
<keyword id="KW-0234">DNA repair</keyword>
<keyword id="KW-0238">DNA-binding</keyword>
<keyword id="KW-0269">Exonuclease</keyword>
<keyword id="KW-0347">Helicase</keyword>
<keyword id="KW-0378">Hydrolase</keyword>
<keyword id="KW-0413">Isomerase</keyword>
<keyword id="KW-0540">Nuclease</keyword>
<keyword id="KW-0547">Nucleotide-binding</keyword>
<keyword id="KW-1185">Reference proteome</keyword>
<name>ADDA_LACAC</name>
<comment type="function">
    <text evidence="1">The heterodimer acts as both an ATP-dependent DNA helicase and an ATP-dependent, dual-direction single-stranded exonuclease. Recognizes the chi site generating a DNA molecule suitable for the initiation of homologous recombination. The AddA nuclease domain is required for chi fragment generation; this subunit has the helicase and 3' -&gt; 5' nuclease activities.</text>
</comment>
<comment type="catalytic activity">
    <reaction evidence="1">
        <text>Couples ATP hydrolysis with the unwinding of duplex DNA by translocating in the 3'-5' direction.</text>
        <dbReference type="EC" id="5.6.2.4"/>
    </reaction>
</comment>
<comment type="catalytic activity">
    <reaction evidence="1">
        <text>ATP + H2O = ADP + phosphate + H(+)</text>
        <dbReference type="Rhea" id="RHEA:13065"/>
        <dbReference type="ChEBI" id="CHEBI:15377"/>
        <dbReference type="ChEBI" id="CHEBI:15378"/>
        <dbReference type="ChEBI" id="CHEBI:30616"/>
        <dbReference type="ChEBI" id="CHEBI:43474"/>
        <dbReference type="ChEBI" id="CHEBI:456216"/>
        <dbReference type="EC" id="5.6.2.4"/>
    </reaction>
</comment>
<comment type="cofactor">
    <cofactor evidence="1">
        <name>Mg(2+)</name>
        <dbReference type="ChEBI" id="CHEBI:18420"/>
    </cofactor>
</comment>
<comment type="subunit">
    <text evidence="1">Heterodimer of AddA and AddB/RexB.</text>
</comment>
<comment type="similarity">
    <text evidence="1">Belongs to the helicase family. AddA subfamily.</text>
</comment>
<evidence type="ECO:0000255" key="1">
    <source>
        <dbReference type="HAMAP-Rule" id="MF_01451"/>
    </source>
</evidence>
<sequence>MPQFTKEQQQAIDDRGHDILVSASAGSGKTTVLVERVLKEIISGTQVSELLVVTFTKAAAEEMKTRIKTALTKELAKPGVNRKYLREQLNQVDTANISTIDAFCLEVIRRFYYSVNLNPSFKILTDETQAALIKERALREIEAESLTDENSGIRYFYDNFAGDRDANSPRDLLLDLYNFAMAKPEYRSWLKNLAKIYEVNNNIVKSKLWQNQIKSYLLNTFVSLQKKIEEYLNNPTIETKELAKVKEDFSLFTQNLDKFIDAIKNDEDYDQQRNLLRLCKFEVKYRKSAKWDEDIQEFYAETQKLKSEAKSQIFDIFTAFYATDEKEQTRIMQESQKIVSAISKAELALIDRFNELKRNENFLDYSDMEQLAYQILSADTSNSQMAREFYQNKFKEILIDEYQDINALQERIIQQVKNTDKNTLFMVGDVKQSIYGFRQAEPSLFLKKYHGFASEENKHEKRILLSDNFRSTEPVTKTVNQLFKSILSSDFGGIDYSKEGQLIFGAKYYPDALPKASEIIVHKKQKDIDNDNNGIDFSEVEMVLARIKQLKKEHFQVLDSTTGEVRALKYSDIAILTRSHGDNLEIMQEFAKRDIPLFITDAENYFQTFELTVIMNYLKIIDNPDQDIPLVTVLRSPLFNFSEKDLAKIRINSKNSGFYSAVASYVGIGDELSDRCKNFLNKLDELRKFATTHRISELIWSIYAQTNLLEIMTGLPNGEQRRINLEALYERASSYESAGFKGLYQFINFINRMRRSQKDLAQPLLSKEAGNAVRLMTIHGSKGLEFPVVFYLGMQHQYQLRDLKGNYVINPDSLGITLRQEHYRVDSLVKAIGNVTKKRQLLEEEARVLYVALTRAKQKLILVGDIANLDKKVQDWSIELDQSGQLSLADKLSVTNPLGFMGPALAFDKHIVINMNDISNALDQSQSVLYVEYKDSDNFEFKKDEDKVVGDSKNNNYTMDKLISTTKKLYQFDYPFKDASETTAYQAVSEIKKAFNDPIETELENSRLLSSTNRYLQPIDTKPNFLYQTKFTGAEIGTATHLILQYYDYTGDGSEKQLDYEIEELIKQKKLNPDIVPSLHKDQIQWFVHSSFAKSFWKNPENLQREVDFSSLISAKNLFKDFSDANAKILVHGTIDGYFVSNDGIILFDYKTDHVNKSYLDKSINLIKEKYTGQLRLYEQAINEFGEEKVIGKYLILLDAKQVVEVK</sequence>
<proteinExistence type="inferred from homology"/>
<accession>Q5FJX0</accession>
<organism>
    <name type="scientific">Lactobacillus acidophilus (strain ATCC 700396 / NCK56 / N2 / NCFM)</name>
    <dbReference type="NCBI Taxonomy" id="272621"/>
    <lineage>
        <taxon>Bacteria</taxon>
        <taxon>Bacillati</taxon>
        <taxon>Bacillota</taxon>
        <taxon>Bacilli</taxon>
        <taxon>Lactobacillales</taxon>
        <taxon>Lactobacillaceae</taxon>
        <taxon>Lactobacillus</taxon>
    </lineage>
</organism>
<gene>
    <name evidence="1" type="primary">addA</name>
    <name type="ordered locus">LBA1165</name>
</gene>
<feature type="chain" id="PRO_0000379275" description="ATP-dependent helicase/nuclease subunit A">
    <location>
        <begin position="1"/>
        <end position="1207"/>
    </location>
</feature>
<feature type="domain" description="UvrD-like helicase ATP-binding" evidence="1">
    <location>
        <begin position="2"/>
        <end position="472"/>
    </location>
</feature>
<feature type="domain" description="UvrD-like helicase C-terminal" evidence="1">
    <location>
        <begin position="492"/>
        <end position="783"/>
    </location>
</feature>
<feature type="binding site" evidence="1">
    <location>
        <begin position="23"/>
        <end position="30"/>
    </location>
    <ligand>
        <name>ATP</name>
        <dbReference type="ChEBI" id="CHEBI:30616"/>
    </ligand>
</feature>
<reference key="1">
    <citation type="journal article" date="2005" name="Proc. Natl. Acad. Sci. U.S.A.">
        <title>Complete genome sequence of the probiotic lactic acid bacterium Lactobacillus acidophilus NCFM.</title>
        <authorList>
            <person name="Altermann E."/>
            <person name="Russell W.M."/>
            <person name="Azcarate-Peril M.A."/>
            <person name="Barrangou R."/>
            <person name="Buck B.L."/>
            <person name="McAuliffe O."/>
            <person name="Souther N."/>
            <person name="Dobson A."/>
            <person name="Duong T."/>
            <person name="Callanan M."/>
            <person name="Lick S."/>
            <person name="Hamrick A."/>
            <person name="Cano R."/>
            <person name="Klaenhammer T.R."/>
        </authorList>
    </citation>
    <scope>NUCLEOTIDE SEQUENCE [LARGE SCALE GENOMIC DNA]</scope>
    <source>
        <strain>ATCC 700396 / NCK56 / N2 / NCFM</strain>
    </source>
</reference>